<protein>
    <recommendedName>
        <fullName evidence="1">DNA-directed RNA polymerase subunit beta'</fullName>
        <ecNumber evidence="1">2.7.7.6</ecNumber>
    </recommendedName>
    <alternativeName>
        <fullName evidence="1">PEP</fullName>
    </alternativeName>
    <alternativeName>
        <fullName evidence="1">Plastid-encoded RNA polymerase subunit beta'</fullName>
        <shortName evidence="1">RNA polymerase subunit beta'</shortName>
    </alternativeName>
</protein>
<accession>Q2L8Z4</accession>
<name>RPOC1_GOSHI</name>
<dbReference type="EC" id="2.7.7.6" evidence="1"/>
<dbReference type="EMBL" id="DQ345959">
    <property type="protein sequence ID" value="ABC73619.1"/>
    <property type="molecule type" value="Genomic_DNA"/>
</dbReference>
<dbReference type="RefSeq" id="YP_538926.1">
    <property type="nucleotide sequence ID" value="NC_007944.1"/>
</dbReference>
<dbReference type="SMR" id="Q2L8Z4"/>
<dbReference type="GeneID" id="3989196"/>
<dbReference type="KEGG" id="ghi:3989196"/>
<dbReference type="OrthoDB" id="72816at41938"/>
<dbReference type="Proteomes" id="UP000189702">
    <property type="component" value="Chloroplast Pltd"/>
</dbReference>
<dbReference type="GO" id="GO:0009507">
    <property type="term" value="C:chloroplast"/>
    <property type="evidence" value="ECO:0007669"/>
    <property type="project" value="UniProtKB-SubCell"/>
</dbReference>
<dbReference type="GO" id="GO:0000428">
    <property type="term" value="C:DNA-directed RNA polymerase complex"/>
    <property type="evidence" value="ECO:0007669"/>
    <property type="project" value="UniProtKB-KW"/>
</dbReference>
<dbReference type="GO" id="GO:0005739">
    <property type="term" value="C:mitochondrion"/>
    <property type="evidence" value="ECO:0007669"/>
    <property type="project" value="GOC"/>
</dbReference>
<dbReference type="GO" id="GO:0003677">
    <property type="term" value="F:DNA binding"/>
    <property type="evidence" value="ECO:0007669"/>
    <property type="project" value="UniProtKB-UniRule"/>
</dbReference>
<dbReference type="GO" id="GO:0003899">
    <property type="term" value="F:DNA-directed RNA polymerase activity"/>
    <property type="evidence" value="ECO:0007669"/>
    <property type="project" value="UniProtKB-UniRule"/>
</dbReference>
<dbReference type="GO" id="GO:0000287">
    <property type="term" value="F:magnesium ion binding"/>
    <property type="evidence" value="ECO:0007669"/>
    <property type="project" value="UniProtKB-UniRule"/>
</dbReference>
<dbReference type="GO" id="GO:0008270">
    <property type="term" value="F:zinc ion binding"/>
    <property type="evidence" value="ECO:0007669"/>
    <property type="project" value="UniProtKB-UniRule"/>
</dbReference>
<dbReference type="GO" id="GO:0006351">
    <property type="term" value="P:DNA-templated transcription"/>
    <property type="evidence" value="ECO:0007669"/>
    <property type="project" value="UniProtKB-UniRule"/>
</dbReference>
<dbReference type="FunFam" id="4.10.860.120:FF:000007">
    <property type="entry name" value="DNA-directed RNA polymerase subunit gamma"/>
    <property type="match status" value="1"/>
</dbReference>
<dbReference type="Gene3D" id="1.10.40.90">
    <property type="match status" value="1"/>
</dbReference>
<dbReference type="Gene3D" id="2.40.40.20">
    <property type="match status" value="1"/>
</dbReference>
<dbReference type="Gene3D" id="4.10.860.120">
    <property type="entry name" value="RNA polymerase II, clamp domain"/>
    <property type="match status" value="1"/>
</dbReference>
<dbReference type="Gene3D" id="1.10.274.100">
    <property type="entry name" value="RNA polymerase Rpb1, domain 3"/>
    <property type="match status" value="1"/>
</dbReference>
<dbReference type="HAMAP" id="MF_01323">
    <property type="entry name" value="RNApol_bact_RpoC1"/>
    <property type="match status" value="1"/>
</dbReference>
<dbReference type="InterPro" id="IPR045867">
    <property type="entry name" value="DNA-dir_RpoC_beta_prime"/>
</dbReference>
<dbReference type="InterPro" id="IPR000722">
    <property type="entry name" value="RNA_pol_asu"/>
</dbReference>
<dbReference type="InterPro" id="IPR006592">
    <property type="entry name" value="RNA_pol_N"/>
</dbReference>
<dbReference type="InterPro" id="IPR007080">
    <property type="entry name" value="RNA_pol_Rpb1_1"/>
</dbReference>
<dbReference type="InterPro" id="IPR042102">
    <property type="entry name" value="RNA_pol_Rpb1_3_sf"/>
</dbReference>
<dbReference type="InterPro" id="IPR044893">
    <property type="entry name" value="RNA_pol_Rpb1_clamp_domain"/>
</dbReference>
<dbReference type="InterPro" id="IPR034678">
    <property type="entry name" value="RNApol_RpoC1"/>
</dbReference>
<dbReference type="PANTHER" id="PTHR19376">
    <property type="entry name" value="DNA-DIRECTED RNA POLYMERASE"/>
    <property type="match status" value="1"/>
</dbReference>
<dbReference type="PANTHER" id="PTHR19376:SF54">
    <property type="entry name" value="DNA-DIRECTED RNA POLYMERASE SUBUNIT BETA"/>
    <property type="match status" value="1"/>
</dbReference>
<dbReference type="Pfam" id="PF04997">
    <property type="entry name" value="RNA_pol_Rpb1_1"/>
    <property type="match status" value="2"/>
</dbReference>
<dbReference type="Pfam" id="PF00623">
    <property type="entry name" value="RNA_pol_Rpb1_2"/>
    <property type="match status" value="2"/>
</dbReference>
<dbReference type="SMART" id="SM00663">
    <property type="entry name" value="RPOLA_N"/>
    <property type="match status" value="1"/>
</dbReference>
<dbReference type="SUPFAM" id="SSF64484">
    <property type="entry name" value="beta and beta-prime subunits of DNA dependent RNA-polymerase"/>
    <property type="match status" value="1"/>
</dbReference>
<geneLocation type="chloroplast"/>
<sequence>MIDRYKHQQLRIGSVSPQQISAWAKKILPNGETVGEVTKPYTFHYKTNKPEKDGLFCERIFGPIKSGICACGNYRVIGNQKEGPKFCEQCGVEFVDSRIRRYQMGYIRLACPVTHVWYLKRLPSYIANLLDKPLKELEGLVYCDFSFARPIAKKPTFLRLRGSFEYEIQSWKYSIPLFFTTQGFDTFRSREISTGAGAIREQLADLDLRILIDYSVVEWKELGEEGLTGNEWEDRKIGRRKDFLVRRMELAKHFIRTNIEPEWMVLCLLPVLPPELRPIIQIDGGKLMSSDINELYRRVIYRNNTLTDLLTTSRSTPGELVMCQEKLVQEAVDTLLDNGIRGQPMRDGHNKVYKSFSDVIEGKEGRFRETLLGKRVDYSGRSVIVVGPSLSLHRCGLPREIAIELFQTFVIRGLIRQHLAPNIGVAKSKIREKGPIVWEILQEVMRGHPVLLNRAPTLHRLGIQAFQPILVEGRAICLHPLVCKGFNADFDGDQMAVHVPLSLEAQAEARLLMFSHMNLLSPAIGDPISVPTQDMLIGLYVLTSGNRRGICANRYNPWNRKSYQNERIDDNNYKSTREPFFCNSYDAIGAYRQKRINLDSPLWLRWQLEQCVIASREAPIEVHYESSGTYHEIYGHYLIVRSLKKKILCIYIRTTVGHISLYREIEEAIQGFFRAYSYDTQSYGI</sequence>
<reference key="1">
    <citation type="journal article" date="2006" name="BMC Genomics">
        <title>The complete chloroplast genome sequence of Gossypium hirsutum: organization and phylogenetic relationships to other angiosperms.</title>
        <authorList>
            <person name="Lee S.-B."/>
            <person name="Kaittanis C."/>
            <person name="Jansen R.K."/>
            <person name="Hostetler J.B."/>
            <person name="Tallon L.J."/>
            <person name="Town C.D."/>
            <person name="Daniell H."/>
        </authorList>
    </citation>
    <scope>NUCLEOTIDE SEQUENCE [LARGE SCALE GENOMIC DNA]</scope>
    <source>
        <strain>cv. Coker 310FR</strain>
    </source>
</reference>
<evidence type="ECO:0000255" key="1">
    <source>
        <dbReference type="HAMAP-Rule" id="MF_01323"/>
    </source>
</evidence>
<feature type="chain" id="PRO_0000277168" description="DNA-directed RNA polymerase subunit beta'">
    <location>
        <begin position="1"/>
        <end position="685"/>
    </location>
</feature>
<feature type="binding site" evidence="1">
    <location>
        <position position="69"/>
    </location>
    <ligand>
        <name>Zn(2+)</name>
        <dbReference type="ChEBI" id="CHEBI:29105"/>
    </ligand>
</feature>
<feature type="binding site" evidence="1">
    <location>
        <position position="71"/>
    </location>
    <ligand>
        <name>Zn(2+)</name>
        <dbReference type="ChEBI" id="CHEBI:29105"/>
    </ligand>
</feature>
<feature type="binding site" evidence="1">
    <location>
        <position position="87"/>
    </location>
    <ligand>
        <name>Zn(2+)</name>
        <dbReference type="ChEBI" id="CHEBI:29105"/>
    </ligand>
</feature>
<feature type="binding site" evidence="1">
    <location>
        <position position="90"/>
    </location>
    <ligand>
        <name>Zn(2+)</name>
        <dbReference type="ChEBI" id="CHEBI:29105"/>
    </ligand>
</feature>
<feature type="binding site" evidence="1">
    <location>
        <position position="489"/>
    </location>
    <ligand>
        <name>Mg(2+)</name>
        <dbReference type="ChEBI" id="CHEBI:18420"/>
    </ligand>
</feature>
<feature type="binding site" evidence="1">
    <location>
        <position position="491"/>
    </location>
    <ligand>
        <name>Mg(2+)</name>
        <dbReference type="ChEBI" id="CHEBI:18420"/>
    </ligand>
</feature>
<feature type="binding site" evidence="1">
    <location>
        <position position="493"/>
    </location>
    <ligand>
        <name>Mg(2+)</name>
        <dbReference type="ChEBI" id="CHEBI:18420"/>
    </ligand>
</feature>
<organism>
    <name type="scientific">Gossypium hirsutum</name>
    <name type="common">Upland cotton</name>
    <name type="synonym">Gossypium mexicanum</name>
    <dbReference type="NCBI Taxonomy" id="3635"/>
    <lineage>
        <taxon>Eukaryota</taxon>
        <taxon>Viridiplantae</taxon>
        <taxon>Streptophyta</taxon>
        <taxon>Embryophyta</taxon>
        <taxon>Tracheophyta</taxon>
        <taxon>Spermatophyta</taxon>
        <taxon>Magnoliopsida</taxon>
        <taxon>eudicotyledons</taxon>
        <taxon>Gunneridae</taxon>
        <taxon>Pentapetalae</taxon>
        <taxon>rosids</taxon>
        <taxon>malvids</taxon>
        <taxon>Malvales</taxon>
        <taxon>Malvaceae</taxon>
        <taxon>Malvoideae</taxon>
        <taxon>Gossypium</taxon>
    </lineage>
</organism>
<keyword id="KW-0150">Chloroplast</keyword>
<keyword id="KW-0240">DNA-directed RNA polymerase</keyword>
<keyword id="KW-0460">Magnesium</keyword>
<keyword id="KW-0479">Metal-binding</keyword>
<keyword id="KW-0548">Nucleotidyltransferase</keyword>
<keyword id="KW-0934">Plastid</keyword>
<keyword id="KW-1185">Reference proteome</keyword>
<keyword id="KW-0804">Transcription</keyword>
<keyword id="KW-0808">Transferase</keyword>
<keyword id="KW-0862">Zinc</keyword>
<gene>
    <name evidence="1" type="primary">rpoC1</name>
</gene>
<comment type="function">
    <text evidence="1">DNA-dependent RNA polymerase catalyzes the transcription of DNA into RNA using the four ribonucleoside triphosphates as substrates.</text>
</comment>
<comment type="catalytic activity">
    <reaction evidence="1">
        <text>RNA(n) + a ribonucleoside 5'-triphosphate = RNA(n+1) + diphosphate</text>
        <dbReference type="Rhea" id="RHEA:21248"/>
        <dbReference type="Rhea" id="RHEA-COMP:14527"/>
        <dbReference type="Rhea" id="RHEA-COMP:17342"/>
        <dbReference type="ChEBI" id="CHEBI:33019"/>
        <dbReference type="ChEBI" id="CHEBI:61557"/>
        <dbReference type="ChEBI" id="CHEBI:140395"/>
        <dbReference type="EC" id="2.7.7.6"/>
    </reaction>
</comment>
<comment type="cofactor">
    <cofactor evidence="1">
        <name>Mg(2+)</name>
        <dbReference type="ChEBI" id="CHEBI:18420"/>
    </cofactor>
    <text evidence="1">Binds 1 Mg(2+) ion per subunit.</text>
</comment>
<comment type="cofactor">
    <cofactor evidence="1">
        <name>Zn(2+)</name>
        <dbReference type="ChEBI" id="CHEBI:29105"/>
    </cofactor>
    <text evidence="1">Binds 1 Zn(2+) ion per subunit.</text>
</comment>
<comment type="subunit">
    <text evidence="1">In plastids the minimal PEP RNA polymerase catalytic core is composed of four subunits: alpha, beta, beta', and beta''. When a (nuclear-encoded) sigma factor is associated with the core the holoenzyme is formed, which can initiate transcription.</text>
</comment>
<comment type="subcellular location">
    <subcellularLocation>
        <location evidence="1">Plastid</location>
        <location evidence="1">Chloroplast</location>
    </subcellularLocation>
</comment>
<comment type="similarity">
    <text evidence="1">Belongs to the RNA polymerase beta' chain family. RpoC1 subfamily.</text>
</comment>
<proteinExistence type="inferred from homology"/>